<gene>
    <name evidence="1" type="primary">hemC</name>
    <name type="ordered locus">WRi_003560</name>
</gene>
<keyword id="KW-0627">Porphyrin biosynthesis</keyword>
<keyword id="KW-0808">Transferase</keyword>
<comment type="function">
    <text evidence="1">Tetrapolymerization of the monopyrrole PBG into the hydroxymethylbilane pre-uroporphyrinogen in several discrete steps.</text>
</comment>
<comment type="catalytic activity">
    <reaction evidence="1">
        <text>4 porphobilinogen + H2O = hydroxymethylbilane + 4 NH4(+)</text>
        <dbReference type="Rhea" id="RHEA:13185"/>
        <dbReference type="ChEBI" id="CHEBI:15377"/>
        <dbReference type="ChEBI" id="CHEBI:28938"/>
        <dbReference type="ChEBI" id="CHEBI:57845"/>
        <dbReference type="ChEBI" id="CHEBI:58126"/>
        <dbReference type="EC" id="2.5.1.61"/>
    </reaction>
</comment>
<comment type="cofactor">
    <cofactor evidence="1">
        <name>dipyrromethane</name>
        <dbReference type="ChEBI" id="CHEBI:60342"/>
    </cofactor>
    <text evidence="1">Binds 1 dipyrromethane group covalently.</text>
</comment>
<comment type="pathway">
    <text evidence="1">Porphyrin-containing compound metabolism; protoporphyrin-IX biosynthesis; coproporphyrinogen-III from 5-aminolevulinate: step 2/4.</text>
</comment>
<comment type="subunit">
    <text evidence="1">Monomer.</text>
</comment>
<comment type="miscellaneous">
    <text evidence="1">The porphobilinogen subunits are added to the dipyrromethane group.</text>
</comment>
<comment type="similarity">
    <text evidence="1">Belongs to the HMBS family.</text>
</comment>
<proteinExistence type="inferred from homology"/>
<reference key="1">
    <citation type="journal article" date="2009" name="Proc. Natl. Acad. Sci. U.S.A.">
        <title>The mosaic genome structure of the Wolbachia wRi strain infecting Drosophila simulans.</title>
        <authorList>
            <person name="Klasson L."/>
            <person name="Westberg J."/>
            <person name="Sapountzis P."/>
            <person name="Naeslund K."/>
            <person name="Lutnaes Y."/>
            <person name="Darby A.C."/>
            <person name="Veneti Z."/>
            <person name="Chen L."/>
            <person name="Braig H.R."/>
            <person name="Garrett R."/>
            <person name="Bourtzis K."/>
            <person name="Andersson S.G."/>
        </authorList>
    </citation>
    <scope>NUCLEOTIDE SEQUENCE [LARGE SCALE GENOMIC DNA]</scope>
    <source>
        <strain>wRi</strain>
    </source>
</reference>
<organism>
    <name type="scientific">Wolbachia sp. subsp. Drosophila simulans (strain wRi)</name>
    <dbReference type="NCBI Taxonomy" id="66084"/>
    <lineage>
        <taxon>Bacteria</taxon>
        <taxon>Pseudomonadati</taxon>
        <taxon>Pseudomonadota</taxon>
        <taxon>Alphaproteobacteria</taxon>
        <taxon>Rickettsiales</taxon>
        <taxon>Anaplasmataceae</taxon>
        <taxon>Wolbachieae</taxon>
        <taxon>Wolbachia</taxon>
    </lineage>
</organism>
<accession>C0R2M3</accession>
<dbReference type="EC" id="2.5.1.61" evidence="1"/>
<dbReference type="EMBL" id="CP001391">
    <property type="protein sequence ID" value="ACN95165.1"/>
    <property type="molecule type" value="Genomic_DNA"/>
</dbReference>
<dbReference type="RefSeq" id="WP_012673143.1">
    <property type="nucleotide sequence ID" value="NZ_MKIF01000166.1"/>
</dbReference>
<dbReference type="SMR" id="C0R2M3"/>
<dbReference type="STRING" id="66084.WRi_003560"/>
<dbReference type="KEGG" id="wri:WRi_003560"/>
<dbReference type="HOGENOM" id="CLU_019704_0_2_5"/>
<dbReference type="UniPathway" id="UPA00251">
    <property type="reaction ID" value="UER00319"/>
</dbReference>
<dbReference type="Proteomes" id="UP000001293">
    <property type="component" value="Chromosome"/>
</dbReference>
<dbReference type="GO" id="GO:0005737">
    <property type="term" value="C:cytoplasm"/>
    <property type="evidence" value="ECO:0007669"/>
    <property type="project" value="TreeGrafter"/>
</dbReference>
<dbReference type="GO" id="GO:0004418">
    <property type="term" value="F:hydroxymethylbilane synthase activity"/>
    <property type="evidence" value="ECO:0007669"/>
    <property type="project" value="UniProtKB-UniRule"/>
</dbReference>
<dbReference type="GO" id="GO:0006782">
    <property type="term" value="P:protoporphyrinogen IX biosynthetic process"/>
    <property type="evidence" value="ECO:0007669"/>
    <property type="project" value="UniProtKB-UniRule"/>
</dbReference>
<dbReference type="FunFam" id="3.40.190.10:FF:000004">
    <property type="entry name" value="Porphobilinogen deaminase"/>
    <property type="match status" value="1"/>
</dbReference>
<dbReference type="FunFam" id="3.40.190.10:FF:000005">
    <property type="entry name" value="Porphobilinogen deaminase"/>
    <property type="match status" value="1"/>
</dbReference>
<dbReference type="Gene3D" id="3.40.190.10">
    <property type="entry name" value="Periplasmic binding protein-like II"/>
    <property type="match status" value="2"/>
</dbReference>
<dbReference type="Gene3D" id="3.30.160.40">
    <property type="entry name" value="Porphobilinogen deaminase, C-terminal domain"/>
    <property type="match status" value="1"/>
</dbReference>
<dbReference type="HAMAP" id="MF_00260">
    <property type="entry name" value="Porphobil_deam"/>
    <property type="match status" value="1"/>
</dbReference>
<dbReference type="InterPro" id="IPR000860">
    <property type="entry name" value="HemC"/>
</dbReference>
<dbReference type="InterPro" id="IPR022419">
    <property type="entry name" value="Porphobilin_deaminase_cofac_BS"/>
</dbReference>
<dbReference type="InterPro" id="IPR022417">
    <property type="entry name" value="Porphobilin_deaminase_N"/>
</dbReference>
<dbReference type="InterPro" id="IPR022418">
    <property type="entry name" value="Porphobilinogen_deaminase_C"/>
</dbReference>
<dbReference type="InterPro" id="IPR036803">
    <property type="entry name" value="Porphobilinogen_deaminase_C_sf"/>
</dbReference>
<dbReference type="NCBIfam" id="TIGR00212">
    <property type="entry name" value="hemC"/>
    <property type="match status" value="1"/>
</dbReference>
<dbReference type="PANTHER" id="PTHR11557">
    <property type="entry name" value="PORPHOBILINOGEN DEAMINASE"/>
    <property type="match status" value="1"/>
</dbReference>
<dbReference type="PANTHER" id="PTHR11557:SF0">
    <property type="entry name" value="PORPHOBILINOGEN DEAMINASE"/>
    <property type="match status" value="1"/>
</dbReference>
<dbReference type="Pfam" id="PF01379">
    <property type="entry name" value="Porphobil_deam"/>
    <property type="match status" value="1"/>
</dbReference>
<dbReference type="Pfam" id="PF03900">
    <property type="entry name" value="Porphobil_deamC"/>
    <property type="match status" value="1"/>
</dbReference>
<dbReference type="PIRSF" id="PIRSF001438">
    <property type="entry name" value="4pyrrol_synth_OHMeBilane_synth"/>
    <property type="match status" value="1"/>
</dbReference>
<dbReference type="PRINTS" id="PR00151">
    <property type="entry name" value="PORPHBDMNASE"/>
</dbReference>
<dbReference type="SUPFAM" id="SSF53850">
    <property type="entry name" value="Periplasmic binding protein-like II"/>
    <property type="match status" value="1"/>
</dbReference>
<dbReference type="SUPFAM" id="SSF54782">
    <property type="entry name" value="Porphobilinogen deaminase (hydroxymethylbilane synthase), C-terminal domain"/>
    <property type="match status" value="1"/>
</dbReference>
<dbReference type="PROSITE" id="PS00533">
    <property type="entry name" value="PORPHOBILINOGEN_DEAM"/>
    <property type="match status" value="1"/>
</dbReference>
<evidence type="ECO:0000255" key="1">
    <source>
        <dbReference type="HAMAP-Rule" id="MF_00260"/>
    </source>
</evidence>
<name>HEM3_WOLWR</name>
<protein>
    <recommendedName>
        <fullName evidence="1">Porphobilinogen deaminase</fullName>
        <shortName evidence="1">PBG</shortName>
        <ecNumber evidence="1">2.5.1.61</ecNumber>
    </recommendedName>
    <alternativeName>
        <fullName evidence="1">Hydroxymethylbilane synthase</fullName>
        <shortName evidence="1">HMBS</shortName>
    </alternativeName>
    <alternativeName>
        <fullName evidence="1">Pre-uroporphyrinogen synthase</fullName>
    </alternativeName>
</protein>
<feature type="chain" id="PRO_1000190296" description="Porphobilinogen deaminase">
    <location>
        <begin position="1"/>
        <end position="292"/>
    </location>
</feature>
<feature type="modified residue" description="S-(dipyrrolylmethanemethyl)cysteine" evidence="1">
    <location>
        <position position="236"/>
    </location>
</feature>
<sequence>MLVKIGTRGSKLAVVQALEAKQKLLDSFPNLSIEIVKIKTSGDKYANANLAEIGGKGLFIKEIEAELLENNIDMAVHSLKDVPAFFSWGLTIPCVLERLSPCDAFISHKHNSLESLPQQATIATSAIRRKVQLLNFRPDLNIVPLRGNVTTRLQNQSFDGIILAEAGLIRLEKHHLITEVLPPKVMLSAVGQGAICIQCRRNDVKIIDLLEKINNNMSFIGVKSERSFMKTVNGSCFTPLAALAEYVSENMLYLRCMLADGKNIYFTERTSFIEDAEKMGMDAGLELKSKCL</sequence>